<dbReference type="EMBL" id="AK022304">
    <property type="protein sequence ID" value="BAB14007.1"/>
    <property type="molecule type" value="mRNA"/>
</dbReference>
<dbReference type="EMBL" id="AL022314">
    <property type="status" value="NOT_ANNOTATED_CDS"/>
    <property type="molecule type" value="Genomic_DNA"/>
</dbReference>
<dbReference type="EMBL" id="CH471095">
    <property type="protein sequence ID" value="EAW60139.1"/>
    <property type="status" value="ALT_INIT"/>
    <property type="molecule type" value="Genomic_DNA"/>
</dbReference>
<dbReference type="EMBL" id="BC025403">
    <property type="protein sequence ID" value="AAH25403.1"/>
    <property type="molecule type" value="mRNA"/>
</dbReference>
<dbReference type="EMBL" id="BC031038">
    <property type="protein sequence ID" value="AAH31038.1"/>
    <property type="molecule type" value="mRNA"/>
</dbReference>
<dbReference type="CCDS" id="CCDS13940.3">
    <molecule id="Q8N5Z5-2"/>
</dbReference>
<dbReference type="CCDS" id="CCDS74854.2">
    <molecule id="Q8N5Z5-1"/>
</dbReference>
<dbReference type="RefSeq" id="NP_001269613.2">
    <molecule id="Q8N5Z5-1"/>
    <property type="nucleotide sequence ID" value="NM_001282684.2"/>
</dbReference>
<dbReference type="RefSeq" id="NP_001269614.1">
    <property type="nucleotide sequence ID" value="NM_001282685.1"/>
</dbReference>
<dbReference type="RefSeq" id="NP_001269615.1">
    <property type="nucleotide sequence ID" value="NM_001282686.1"/>
</dbReference>
<dbReference type="RefSeq" id="NP_078957.3">
    <molecule id="Q8N5Z5-2"/>
    <property type="nucleotide sequence ID" value="NM_024681.4"/>
</dbReference>
<dbReference type="PDB" id="5A6R">
    <property type="method" value="X-ray"/>
    <property type="resolution" value="2.85 A"/>
    <property type="chains" value="A/B/C/D/E=13-124"/>
</dbReference>
<dbReference type="PDBsum" id="5A6R"/>
<dbReference type="SMR" id="Q8N5Z5"/>
<dbReference type="BioGRID" id="122848">
    <property type="interactions" value="135"/>
</dbReference>
<dbReference type="FunCoup" id="Q8N5Z5">
    <property type="interactions" value="505"/>
</dbReference>
<dbReference type="IntAct" id="Q8N5Z5">
    <property type="interactions" value="130"/>
</dbReference>
<dbReference type="MINT" id="Q8N5Z5"/>
<dbReference type="STRING" id="9606.ENSP00000385096"/>
<dbReference type="GlyGen" id="Q8N5Z5">
    <property type="glycosylation" value="1 site, 1 O-linked glycan (1 site)"/>
</dbReference>
<dbReference type="PhosphoSitePlus" id="Q8N5Z5"/>
<dbReference type="BioMuta" id="KCTD17"/>
<dbReference type="DMDM" id="205371782"/>
<dbReference type="jPOST" id="Q8N5Z5"/>
<dbReference type="MassIVE" id="Q8N5Z5"/>
<dbReference type="PaxDb" id="9606-ENSP00000385096"/>
<dbReference type="PeptideAtlas" id="Q8N5Z5"/>
<dbReference type="ProteomicsDB" id="72116">
    <molecule id="Q8N5Z5-1"/>
</dbReference>
<dbReference type="ProteomicsDB" id="72117">
    <molecule id="Q8N5Z5-2"/>
</dbReference>
<dbReference type="Pumba" id="Q8N5Z5"/>
<dbReference type="Antibodypedia" id="11878">
    <property type="antibodies" value="113 antibodies from 20 providers"/>
</dbReference>
<dbReference type="DNASU" id="79734"/>
<dbReference type="Ensembl" id="ENST00000402077.8">
    <molecule id="Q8N5Z5-2"/>
    <property type="protein sequence ID" value="ENSP00000384391.4"/>
    <property type="gene ID" value="ENSG00000100379.18"/>
</dbReference>
<dbReference type="Ensembl" id="ENST00000403888.8">
    <molecule id="Q8N5Z5-1"/>
    <property type="protein sequence ID" value="ENSP00000385096.4"/>
    <property type="gene ID" value="ENSG00000100379.18"/>
</dbReference>
<dbReference type="GeneID" id="79734"/>
<dbReference type="KEGG" id="hsa:79734"/>
<dbReference type="MANE-Select" id="ENST00000403888.8">
    <property type="protein sequence ID" value="ENSP00000385096.4"/>
    <property type="RefSeq nucleotide sequence ID" value="NM_001282684.2"/>
    <property type="RefSeq protein sequence ID" value="NP_001269613.2"/>
</dbReference>
<dbReference type="UCSC" id="uc010gxb.5">
    <molecule id="Q8N5Z5-1"/>
    <property type="organism name" value="human"/>
</dbReference>
<dbReference type="AGR" id="HGNC:25705"/>
<dbReference type="CTD" id="79734"/>
<dbReference type="DisGeNET" id="79734"/>
<dbReference type="GeneCards" id="KCTD17"/>
<dbReference type="HGNC" id="HGNC:25705">
    <property type="gene designation" value="KCTD17"/>
</dbReference>
<dbReference type="HPA" id="ENSG00000100379">
    <property type="expression patterns" value="Tissue enhanced (brain)"/>
</dbReference>
<dbReference type="MalaCards" id="KCTD17"/>
<dbReference type="MIM" id="616386">
    <property type="type" value="gene"/>
</dbReference>
<dbReference type="MIM" id="616398">
    <property type="type" value="phenotype"/>
</dbReference>
<dbReference type="neXtProt" id="NX_Q8N5Z5"/>
<dbReference type="OpenTargets" id="ENSG00000100379"/>
<dbReference type="Orphanet" id="36899">
    <property type="disease" value="Myoclonus-dystonia syndrome"/>
</dbReference>
<dbReference type="PharmGKB" id="PA142671638"/>
<dbReference type="VEuPathDB" id="HostDB:ENSG00000100379"/>
<dbReference type="eggNOG" id="KOG2715">
    <property type="taxonomic scope" value="Eukaryota"/>
</dbReference>
<dbReference type="GeneTree" id="ENSGT00940000161746"/>
<dbReference type="HOGENOM" id="CLU_070830_2_0_1"/>
<dbReference type="InParanoid" id="Q8N5Z5"/>
<dbReference type="OrthoDB" id="1244179at2759"/>
<dbReference type="PAN-GO" id="Q8N5Z5">
    <property type="GO annotations" value="5 GO annotations based on evolutionary models"/>
</dbReference>
<dbReference type="PhylomeDB" id="Q8N5Z5"/>
<dbReference type="TreeFam" id="TF313754"/>
<dbReference type="PathwayCommons" id="Q8N5Z5"/>
<dbReference type="SignaLink" id="Q8N5Z5"/>
<dbReference type="SIGNOR" id="Q8N5Z5"/>
<dbReference type="BioGRID-ORCS" id="79734">
    <property type="hits" value="11 hits in 1148 CRISPR screens"/>
</dbReference>
<dbReference type="GenomeRNAi" id="79734"/>
<dbReference type="Pharos" id="Q8N5Z5">
    <property type="development level" value="Tbio"/>
</dbReference>
<dbReference type="PRO" id="PR:Q8N5Z5"/>
<dbReference type="Proteomes" id="UP000005640">
    <property type="component" value="Chromosome 22"/>
</dbReference>
<dbReference type="RNAct" id="Q8N5Z5">
    <property type="molecule type" value="protein"/>
</dbReference>
<dbReference type="Bgee" id="ENSG00000100379">
    <property type="expression patterns" value="Expressed in putamen and 163 other cell types or tissues"/>
</dbReference>
<dbReference type="ExpressionAtlas" id="Q8N5Z5">
    <property type="expression patterns" value="baseline and differential"/>
</dbReference>
<dbReference type="GO" id="GO:0031463">
    <property type="term" value="C:Cul3-RING ubiquitin ligase complex"/>
    <property type="evidence" value="ECO:0000314"/>
    <property type="project" value="UniProtKB"/>
</dbReference>
<dbReference type="GO" id="GO:0005737">
    <property type="term" value="C:cytoplasm"/>
    <property type="evidence" value="ECO:0000314"/>
    <property type="project" value="UniProtKB"/>
</dbReference>
<dbReference type="GO" id="GO:0005783">
    <property type="term" value="C:endoplasmic reticulum"/>
    <property type="evidence" value="ECO:0007669"/>
    <property type="project" value="GOC"/>
</dbReference>
<dbReference type="GO" id="GO:0097602">
    <property type="term" value="F:cullin family protein binding"/>
    <property type="evidence" value="ECO:0000353"/>
    <property type="project" value="UniProtKB"/>
</dbReference>
<dbReference type="GO" id="GO:0042802">
    <property type="term" value="F:identical protein binding"/>
    <property type="evidence" value="ECO:0000353"/>
    <property type="project" value="IntAct"/>
</dbReference>
<dbReference type="GO" id="GO:1990756">
    <property type="term" value="F:ubiquitin-like ligase-substrate adaptor activity"/>
    <property type="evidence" value="ECO:0000314"/>
    <property type="project" value="UniProtKB"/>
</dbReference>
<dbReference type="GO" id="GO:0030030">
    <property type="term" value="P:cell projection organization"/>
    <property type="evidence" value="ECO:0007669"/>
    <property type="project" value="UniProtKB-KW"/>
</dbReference>
<dbReference type="GO" id="GO:0032469">
    <property type="term" value="P:endoplasmic reticulum calcium ion homeostasis"/>
    <property type="evidence" value="ECO:0000315"/>
    <property type="project" value="UniProtKB"/>
</dbReference>
<dbReference type="GO" id="GO:0045724">
    <property type="term" value="P:positive regulation of cilium assembly"/>
    <property type="evidence" value="ECO:0000315"/>
    <property type="project" value="UniProtKB"/>
</dbReference>
<dbReference type="GO" id="GO:0043161">
    <property type="term" value="P:proteasome-mediated ubiquitin-dependent protein catabolic process"/>
    <property type="evidence" value="ECO:0000315"/>
    <property type="project" value="UniProtKB"/>
</dbReference>
<dbReference type="GO" id="GO:0051260">
    <property type="term" value="P:protein homooligomerization"/>
    <property type="evidence" value="ECO:0007669"/>
    <property type="project" value="InterPro"/>
</dbReference>
<dbReference type="CDD" id="cd18391">
    <property type="entry name" value="BTB_POZ_KCTD17"/>
    <property type="match status" value="1"/>
</dbReference>
<dbReference type="FunFam" id="3.30.70.2000:FF:000001">
    <property type="entry name" value="Potassium channel tetramerization domain-containing 17"/>
    <property type="match status" value="1"/>
</dbReference>
<dbReference type="FunFam" id="3.30.710.10:FF:000005">
    <property type="entry name" value="Potassium channel tetramerization domain-containing 17"/>
    <property type="match status" value="1"/>
</dbReference>
<dbReference type="Gene3D" id="3.30.70.2000">
    <property type="match status" value="1"/>
</dbReference>
<dbReference type="Gene3D" id="6.10.140.750">
    <property type="match status" value="1"/>
</dbReference>
<dbReference type="Gene3D" id="3.30.710.10">
    <property type="entry name" value="Potassium Channel Kv1.1, Chain A"/>
    <property type="match status" value="1"/>
</dbReference>
<dbReference type="InterPro" id="IPR000210">
    <property type="entry name" value="BTB/POZ_dom"/>
</dbReference>
<dbReference type="InterPro" id="IPR011333">
    <property type="entry name" value="SKP1/BTB/POZ_sf"/>
</dbReference>
<dbReference type="InterPro" id="IPR003131">
    <property type="entry name" value="T1-type_BTB"/>
</dbReference>
<dbReference type="PANTHER" id="PTHR14958:SF24">
    <property type="entry name" value="BTB_POZ DOMAIN-CONTAINING PROTEIN KCTD17"/>
    <property type="match status" value="1"/>
</dbReference>
<dbReference type="PANTHER" id="PTHR14958">
    <property type="entry name" value="POTASSIUM CHANNEL TETRAMERISATION DOMAIN CONTAINING PROTEIN"/>
    <property type="match status" value="1"/>
</dbReference>
<dbReference type="Pfam" id="PF02214">
    <property type="entry name" value="BTB_2"/>
    <property type="match status" value="1"/>
</dbReference>
<dbReference type="SMART" id="SM00225">
    <property type="entry name" value="BTB"/>
    <property type="match status" value="1"/>
</dbReference>
<dbReference type="SUPFAM" id="SSF54695">
    <property type="entry name" value="POZ domain"/>
    <property type="match status" value="1"/>
</dbReference>
<sequence length="314" mass="34888">MRMEAGEAAPPAGAGGRAAGGWGKWVRLNVGGTVFLTTRQTLCREQKSFLSRLCQGEELQSDRDETGAYLIDRDPTYFGPILNFLRHGKLVLDKDMAEEGVLEEAEFYNIGPLIRIIKDRMEEKDYTVTQVPPKHVYRVLQCQEEELTQMVSTMSDGWRFEQLVNIGSSYNYGSEDQAEFLCVVSKELHSTPNGLSSESSRKTKSTEEQLEEQQQQEEEVEEVEVEQVQVEADAQEKAQSSQDPANLFSLPPLPPPPLPAGGSRPHPLRPEAELAVRASPRPLARPQSCHPCCYKPEAPGCEAPDHLQGLGVPI</sequence>
<keyword id="KW-0002">3D-structure</keyword>
<keyword id="KW-0025">Alternative splicing</keyword>
<keyword id="KW-0970">Cilium biogenesis/degradation</keyword>
<keyword id="KW-0175">Coiled coil</keyword>
<keyword id="KW-0963">Cytoplasm</keyword>
<keyword id="KW-0225">Disease variant</keyword>
<keyword id="KW-1023">Dystonia</keyword>
<keyword id="KW-1267">Proteomics identification</keyword>
<keyword id="KW-1185">Reference proteome</keyword>
<keyword id="KW-0833">Ubl conjugation pathway</keyword>
<reference key="1">
    <citation type="journal article" date="2004" name="Nat. Genet.">
        <title>Complete sequencing and characterization of 21,243 full-length human cDNAs.</title>
        <authorList>
            <person name="Ota T."/>
            <person name="Suzuki Y."/>
            <person name="Nishikawa T."/>
            <person name="Otsuki T."/>
            <person name="Sugiyama T."/>
            <person name="Irie R."/>
            <person name="Wakamatsu A."/>
            <person name="Hayashi K."/>
            <person name="Sato H."/>
            <person name="Nagai K."/>
            <person name="Kimura K."/>
            <person name="Makita H."/>
            <person name="Sekine M."/>
            <person name="Obayashi M."/>
            <person name="Nishi T."/>
            <person name="Shibahara T."/>
            <person name="Tanaka T."/>
            <person name="Ishii S."/>
            <person name="Yamamoto J."/>
            <person name="Saito K."/>
            <person name="Kawai Y."/>
            <person name="Isono Y."/>
            <person name="Nakamura Y."/>
            <person name="Nagahari K."/>
            <person name="Murakami K."/>
            <person name="Yasuda T."/>
            <person name="Iwayanagi T."/>
            <person name="Wagatsuma M."/>
            <person name="Shiratori A."/>
            <person name="Sudo H."/>
            <person name="Hosoiri T."/>
            <person name="Kaku Y."/>
            <person name="Kodaira H."/>
            <person name="Kondo H."/>
            <person name="Sugawara M."/>
            <person name="Takahashi M."/>
            <person name="Kanda K."/>
            <person name="Yokoi T."/>
            <person name="Furuya T."/>
            <person name="Kikkawa E."/>
            <person name="Omura Y."/>
            <person name="Abe K."/>
            <person name="Kamihara K."/>
            <person name="Katsuta N."/>
            <person name="Sato K."/>
            <person name="Tanikawa M."/>
            <person name="Yamazaki M."/>
            <person name="Ninomiya K."/>
            <person name="Ishibashi T."/>
            <person name="Yamashita H."/>
            <person name="Murakawa K."/>
            <person name="Fujimori K."/>
            <person name="Tanai H."/>
            <person name="Kimata M."/>
            <person name="Watanabe M."/>
            <person name="Hiraoka S."/>
            <person name="Chiba Y."/>
            <person name="Ishida S."/>
            <person name="Ono Y."/>
            <person name="Takiguchi S."/>
            <person name="Watanabe S."/>
            <person name="Yosida M."/>
            <person name="Hotuta T."/>
            <person name="Kusano J."/>
            <person name="Kanehori K."/>
            <person name="Takahashi-Fujii A."/>
            <person name="Hara H."/>
            <person name="Tanase T.-O."/>
            <person name="Nomura Y."/>
            <person name="Togiya S."/>
            <person name="Komai F."/>
            <person name="Hara R."/>
            <person name="Takeuchi K."/>
            <person name="Arita M."/>
            <person name="Imose N."/>
            <person name="Musashino K."/>
            <person name="Yuuki H."/>
            <person name="Oshima A."/>
            <person name="Sasaki N."/>
            <person name="Aotsuka S."/>
            <person name="Yoshikawa Y."/>
            <person name="Matsunawa H."/>
            <person name="Ichihara T."/>
            <person name="Shiohata N."/>
            <person name="Sano S."/>
            <person name="Moriya S."/>
            <person name="Momiyama H."/>
            <person name="Satoh N."/>
            <person name="Takami S."/>
            <person name="Terashima Y."/>
            <person name="Suzuki O."/>
            <person name="Nakagawa S."/>
            <person name="Senoh A."/>
            <person name="Mizoguchi H."/>
            <person name="Goto Y."/>
            <person name="Shimizu F."/>
            <person name="Wakebe H."/>
            <person name="Hishigaki H."/>
            <person name="Watanabe T."/>
            <person name="Sugiyama A."/>
            <person name="Takemoto M."/>
            <person name="Kawakami B."/>
            <person name="Yamazaki M."/>
            <person name="Watanabe K."/>
            <person name="Kumagai A."/>
            <person name="Itakura S."/>
            <person name="Fukuzumi Y."/>
            <person name="Fujimori Y."/>
            <person name="Komiyama M."/>
            <person name="Tashiro H."/>
            <person name="Tanigami A."/>
            <person name="Fujiwara T."/>
            <person name="Ono T."/>
            <person name="Yamada K."/>
            <person name="Fujii Y."/>
            <person name="Ozaki K."/>
            <person name="Hirao M."/>
            <person name="Ohmori Y."/>
            <person name="Kawabata A."/>
            <person name="Hikiji T."/>
            <person name="Kobatake N."/>
            <person name="Inagaki H."/>
            <person name="Ikema Y."/>
            <person name="Okamoto S."/>
            <person name="Okitani R."/>
            <person name="Kawakami T."/>
            <person name="Noguchi S."/>
            <person name="Itoh T."/>
            <person name="Shigeta K."/>
            <person name="Senba T."/>
            <person name="Matsumura K."/>
            <person name="Nakajima Y."/>
            <person name="Mizuno T."/>
            <person name="Morinaga M."/>
            <person name="Sasaki M."/>
            <person name="Togashi T."/>
            <person name="Oyama M."/>
            <person name="Hata H."/>
            <person name="Watanabe M."/>
            <person name="Komatsu T."/>
            <person name="Mizushima-Sugano J."/>
            <person name="Satoh T."/>
            <person name="Shirai Y."/>
            <person name="Takahashi Y."/>
            <person name="Nakagawa K."/>
            <person name="Okumura K."/>
            <person name="Nagase T."/>
            <person name="Nomura N."/>
            <person name="Kikuchi H."/>
            <person name="Masuho Y."/>
            <person name="Yamashita R."/>
            <person name="Nakai K."/>
            <person name="Yada T."/>
            <person name="Nakamura Y."/>
            <person name="Ohara O."/>
            <person name="Isogai T."/>
            <person name="Sugano S."/>
        </authorList>
    </citation>
    <scope>NUCLEOTIDE SEQUENCE [LARGE SCALE MRNA] (ISOFORM 2)</scope>
    <source>
        <tissue>Mammary gland</tissue>
    </source>
</reference>
<reference key="2">
    <citation type="journal article" date="1999" name="Nature">
        <title>The DNA sequence of human chromosome 22.</title>
        <authorList>
            <person name="Dunham I."/>
            <person name="Hunt A.R."/>
            <person name="Collins J.E."/>
            <person name="Bruskiewich R."/>
            <person name="Beare D.M."/>
            <person name="Clamp M."/>
            <person name="Smink L.J."/>
            <person name="Ainscough R."/>
            <person name="Almeida J.P."/>
            <person name="Babbage A.K."/>
            <person name="Bagguley C."/>
            <person name="Bailey J."/>
            <person name="Barlow K.F."/>
            <person name="Bates K.N."/>
            <person name="Beasley O.P."/>
            <person name="Bird C.P."/>
            <person name="Blakey S.E."/>
            <person name="Bridgeman A.M."/>
            <person name="Buck D."/>
            <person name="Burgess J."/>
            <person name="Burrill W.D."/>
            <person name="Burton J."/>
            <person name="Carder C."/>
            <person name="Carter N.P."/>
            <person name="Chen Y."/>
            <person name="Clark G."/>
            <person name="Clegg S.M."/>
            <person name="Cobley V.E."/>
            <person name="Cole C.G."/>
            <person name="Collier R.E."/>
            <person name="Connor R."/>
            <person name="Conroy D."/>
            <person name="Corby N.R."/>
            <person name="Coville G.J."/>
            <person name="Cox A.V."/>
            <person name="Davis J."/>
            <person name="Dawson E."/>
            <person name="Dhami P.D."/>
            <person name="Dockree C."/>
            <person name="Dodsworth S.J."/>
            <person name="Durbin R.M."/>
            <person name="Ellington A.G."/>
            <person name="Evans K.L."/>
            <person name="Fey J.M."/>
            <person name="Fleming K."/>
            <person name="French L."/>
            <person name="Garner A.A."/>
            <person name="Gilbert J.G.R."/>
            <person name="Goward M.E."/>
            <person name="Grafham D.V."/>
            <person name="Griffiths M.N.D."/>
            <person name="Hall C."/>
            <person name="Hall R.E."/>
            <person name="Hall-Tamlyn G."/>
            <person name="Heathcott R.W."/>
            <person name="Ho S."/>
            <person name="Holmes S."/>
            <person name="Hunt S.E."/>
            <person name="Jones M.C."/>
            <person name="Kershaw J."/>
            <person name="Kimberley A.M."/>
            <person name="King A."/>
            <person name="Laird G.K."/>
            <person name="Langford C.F."/>
            <person name="Leversha M.A."/>
            <person name="Lloyd C."/>
            <person name="Lloyd D.M."/>
            <person name="Martyn I.D."/>
            <person name="Mashreghi-Mohammadi M."/>
            <person name="Matthews L.H."/>
            <person name="Mccann O.T."/>
            <person name="Mcclay J."/>
            <person name="Mclaren S."/>
            <person name="McMurray A.A."/>
            <person name="Milne S.A."/>
            <person name="Mortimore B.J."/>
            <person name="Odell C.N."/>
            <person name="Pavitt R."/>
            <person name="Pearce A.V."/>
            <person name="Pearson D."/>
            <person name="Phillimore B.J.C.T."/>
            <person name="Phillips S.H."/>
            <person name="Plumb R.W."/>
            <person name="Ramsay H."/>
            <person name="Ramsey Y."/>
            <person name="Rogers L."/>
            <person name="Ross M.T."/>
            <person name="Scott C.E."/>
            <person name="Sehra H.K."/>
            <person name="Skuce C.D."/>
            <person name="Smalley S."/>
            <person name="Smith M.L."/>
            <person name="Soderlund C."/>
            <person name="Spragon L."/>
            <person name="Steward C.A."/>
            <person name="Sulston J.E."/>
            <person name="Swann R.M."/>
            <person name="Vaudin M."/>
            <person name="Wall M."/>
            <person name="Wallis J.M."/>
            <person name="Whiteley M.N."/>
            <person name="Willey D.L."/>
            <person name="Williams L."/>
            <person name="Williams S.A."/>
            <person name="Williamson H."/>
            <person name="Wilmer T.E."/>
            <person name="Wilming L."/>
            <person name="Wright C.L."/>
            <person name="Hubbard T."/>
            <person name="Bentley D.R."/>
            <person name="Beck S."/>
            <person name="Rogers J."/>
            <person name="Shimizu N."/>
            <person name="Minoshima S."/>
            <person name="Kawasaki K."/>
            <person name="Sasaki T."/>
            <person name="Asakawa S."/>
            <person name="Kudoh J."/>
            <person name="Shintani A."/>
            <person name="Shibuya K."/>
            <person name="Yoshizaki Y."/>
            <person name="Aoki N."/>
            <person name="Mitsuyama S."/>
            <person name="Roe B.A."/>
            <person name="Chen F."/>
            <person name="Chu L."/>
            <person name="Crabtree J."/>
            <person name="Deschamps S."/>
            <person name="Do A."/>
            <person name="Do T."/>
            <person name="Dorman A."/>
            <person name="Fang F."/>
            <person name="Fu Y."/>
            <person name="Hu P."/>
            <person name="Hua A."/>
            <person name="Kenton S."/>
            <person name="Lai H."/>
            <person name="Lao H.I."/>
            <person name="Lewis J."/>
            <person name="Lewis S."/>
            <person name="Lin S.-P."/>
            <person name="Loh P."/>
            <person name="Malaj E."/>
            <person name="Nguyen T."/>
            <person name="Pan H."/>
            <person name="Phan S."/>
            <person name="Qi S."/>
            <person name="Qian Y."/>
            <person name="Ray L."/>
            <person name="Ren Q."/>
            <person name="Shaull S."/>
            <person name="Sloan D."/>
            <person name="Song L."/>
            <person name="Wang Q."/>
            <person name="Wang Y."/>
            <person name="Wang Z."/>
            <person name="White J."/>
            <person name="Willingham D."/>
            <person name="Wu H."/>
            <person name="Yao Z."/>
            <person name="Zhan M."/>
            <person name="Zhang G."/>
            <person name="Chissoe S."/>
            <person name="Murray J."/>
            <person name="Miller N."/>
            <person name="Minx P."/>
            <person name="Fulton R."/>
            <person name="Johnson D."/>
            <person name="Bemis G."/>
            <person name="Bentley D."/>
            <person name="Bradshaw H."/>
            <person name="Bourne S."/>
            <person name="Cordes M."/>
            <person name="Du Z."/>
            <person name="Fulton L."/>
            <person name="Goela D."/>
            <person name="Graves T."/>
            <person name="Hawkins J."/>
            <person name="Hinds K."/>
            <person name="Kemp K."/>
            <person name="Latreille P."/>
            <person name="Layman D."/>
            <person name="Ozersky P."/>
            <person name="Rohlfing T."/>
            <person name="Scheet P."/>
            <person name="Walker C."/>
            <person name="Wamsley A."/>
            <person name="Wohldmann P."/>
            <person name="Pepin K."/>
            <person name="Nelson J."/>
            <person name="Korf I."/>
            <person name="Bedell J.A."/>
            <person name="Hillier L.W."/>
            <person name="Mardis E."/>
            <person name="Waterston R."/>
            <person name="Wilson R."/>
            <person name="Emanuel B.S."/>
            <person name="Shaikh T."/>
            <person name="Kurahashi H."/>
            <person name="Saitta S."/>
            <person name="Budarf M.L."/>
            <person name="McDermid H.E."/>
            <person name="Johnson A."/>
            <person name="Wong A.C.C."/>
            <person name="Morrow B.E."/>
            <person name="Edelmann L."/>
            <person name="Kim U.J."/>
            <person name="Shizuya H."/>
            <person name="Simon M.I."/>
            <person name="Dumanski J.P."/>
            <person name="Peyrard M."/>
            <person name="Kedra D."/>
            <person name="Seroussi E."/>
            <person name="Fransson I."/>
            <person name="Tapia I."/>
            <person name="Bruder C.E."/>
            <person name="O'Brien K.P."/>
            <person name="Wilkinson P."/>
            <person name="Bodenteich A."/>
            <person name="Hartman K."/>
            <person name="Hu X."/>
            <person name="Khan A.S."/>
            <person name="Lane L."/>
            <person name="Tilahun Y."/>
            <person name="Wright H."/>
        </authorList>
    </citation>
    <scope>NUCLEOTIDE SEQUENCE [LARGE SCALE GENOMIC DNA]</scope>
</reference>
<reference key="3">
    <citation type="submission" date="2005-07" db="EMBL/GenBank/DDBJ databases">
        <authorList>
            <person name="Mural R.J."/>
            <person name="Istrail S."/>
            <person name="Sutton G.G."/>
            <person name="Florea L."/>
            <person name="Halpern A.L."/>
            <person name="Mobarry C.M."/>
            <person name="Lippert R."/>
            <person name="Walenz B."/>
            <person name="Shatkay H."/>
            <person name="Dew I."/>
            <person name="Miller J.R."/>
            <person name="Flanigan M.J."/>
            <person name="Edwards N.J."/>
            <person name="Bolanos R."/>
            <person name="Fasulo D."/>
            <person name="Halldorsson B.V."/>
            <person name="Hannenhalli S."/>
            <person name="Turner R."/>
            <person name="Yooseph S."/>
            <person name="Lu F."/>
            <person name="Nusskern D.R."/>
            <person name="Shue B.C."/>
            <person name="Zheng X.H."/>
            <person name="Zhong F."/>
            <person name="Delcher A.L."/>
            <person name="Huson D.H."/>
            <person name="Kravitz S.A."/>
            <person name="Mouchard L."/>
            <person name="Reinert K."/>
            <person name="Remington K.A."/>
            <person name="Clark A.G."/>
            <person name="Waterman M.S."/>
            <person name="Eichler E.E."/>
            <person name="Adams M.D."/>
            <person name="Hunkapiller M.W."/>
            <person name="Myers E.W."/>
            <person name="Venter J.C."/>
        </authorList>
    </citation>
    <scope>NUCLEOTIDE SEQUENCE [LARGE SCALE GENOMIC DNA]</scope>
</reference>
<reference key="4">
    <citation type="journal article" date="2004" name="Genome Res.">
        <title>The status, quality, and expansion of the NIH full-length cDNA project: the Mammalian Gene Collection (MGC).</title>
        <authorList>
            <consortium name="The MGC Project Team"/>
        </authorList>
    </citation>
    <scope>NUCLEOTIDE SEQUENCE [LARGE SCALE MRNA] (ISOFORMS 1 AND 2)</scope>
    <scope>VARIANT GLY-44</scope>
    <source>
        <tissue>Brain</tissue>
        <tissue>Testis</tissue>
    </source>
</reference>
<reference key="5">
    <citation type="journal article" date="2014" name="Nat. Commun.">
        <title>Ubiquitin-proteasome system controls ciliogenesis at the initial step of axoneme extension.</title>
        <authorList>
            <person name="Kasahara K."/>
            <person name="Kawakami Y."/>
            <person name="Kiyono T."/>
            <person name="Yonemura S."/>
            <person name="Kawamura Y."/>
            <person name="Era S."/>
            <person name="Matsuzaki F."/>
            <person name="Goshima N."/>
            <person name="Inagaki M."/>
        </authorList>
    </citation>
    <scope>FUNCTION</scope>
    <scope>INTERACTION WITH TCHP AND CUL3</scope>
    <scope>SUBUNIT</scope>
</reference>
<reference key="6">
    <citation type="journal article" date="2015" name="Am. J. Hum. Genet.">
        <title>A missense mutation in KCTD17 causes autosomal dominant myoclonus-dystonia.</title>
        <authorList>
            <person name="Mencacci N.E."/>
            <person name="Rubio-Agusti I."/>
            <person name="Zdebik A."/>
            <person name="Asmus F."/>
            <person name="Ludtmann M.H."/>
            <person name="Ryten M."/>
            <person name="Plagnol V."/>
            <person name="Hauser A.K."/>
            <person name="Bandres-Ciga S."/>
            <person name="Bettencourt C."/>
            <person name="Forabosco P."/>
            <person name="Hughes D."/>
            <person name="Soutar M.M."/>
            <person name="Peall K."/>
            <person name="Morris H.R."/>
            <person name="Trabzuni D."/>
            <person name="Tekman M."/>
            <person name="Stanescu H.C."/>
            <person name="Kleta R."/>
            <person name="Carecchio M."/>
            <person name="Zorzi G."/>
            <person name="Nardocci N."/>
            <person name="Garavaglia B."/>
            <person name="Lohmann E."/>
            <person name="Weissbach A."/>
            <person name="Klein C."/>
            <person name="Hardy J."/>
            <person name="Pittman A.M."/>
            <person name="Foltynie T."/>
            <person name="Abramov A.Y."/>
            <person name="Gasser T."/>
            <person name="Bhatia K.P."/>
            <person name="Wood N.W."/>
        </authorList>
    </citation>
    <scope>FUNCTION</scope>
    <scope>TISSUE SPECIFICITY</scope>
    <scope>SUBCELLULAR LOCATION</scope>
    <scope>INVOLVEMENT IN DYT26</scope>
    <scope>VARIANT DYT26 HIS-138</scope>
    <scope>CHARACTERIZATION OF VARIANT DYT26 HIS-138</scope>
</reference>
<reference key="7">
    <citation type="journal article" date="2017" name="Biochem. J.">
        <title>Structural complexity in the KCTD family of Cullin3-dependent E3 ubiquitin ligases.</title>
        <authorList>
            <person name="Pinkas D.M."/>
            <person name="Sanvitale C.E."/>
            <person name="Bufton J.C."/>
            <person name="Sorrell F.J."/>
            <person name="Solcan N."/>
            <person name="Chalk R."/>
            <person name="Doutch J."/>
            <person name="Bullock A.N."/>
        </authorList>
    </citation>
    <scope>X-RAY CRYSTALLOGRAPHY (2.85 ANGSTROMS) OF 13-124</scope>
    <scope>SUBUNIT</scope>
</reference>
<gene>
    <name evidence="11" type="primary">KCTD17</name>
</gene>
<protein>
    <recommendedName>
        <fullName evidence="10">BTB/POZ domain-containing protein KCTD17</fullName>
    </recommendedName>
</protein>
<feature type="chain" id="PRO_0000247841" description="BTB/POZ domain-containing protein KCTD17">
    <location>
        <begin position="1"/>
        <end position="314"/>
    </location>
</feature>
<feature type="domain" description="BTB" evidence="2">
    <location>
        <begin position="24"/>
        <end position="94"/>
    </location>
</feature>
<feature type="region of interest" description="Disordered" evidence="3">
    <location>
        <begin position="190"/>
        <end position="268"/>
    </location>
</feature>
<feature type="coiled-coil region" evidence="1">
    <location>
        <begin position="196"/>
        <end position="239"/>
    </location>
</feature>
<feature type="compositionally biased region" description="Acidic residues" evidence="3">
    <location>
        <begin position="208"/>
        <end position="225"/>
    </location>
</feature>
<feature type="splice variant" id="VSP_020072" description="In isoform 2." evidence="8 9">
    <location>
        <begin position="238"/>
        <end position="261"/>
    </location>
</feature>
<feature type="sequence variant" id="VAR_027157" description="In dbSNP:rs17852877." evidence="4">
    <original>R</original>
    <variation>G</variation>
    <location>
        <position position="44"/>
    </location>
</feature>
<feature type="sequence variant" id="VAR_073806" description="In DYT26; does not affect cytoplasmic subcellular location; dbSNP:rs786205860." evidence="6">
    <original>R</original>
    <variation>H</variation>
    <location>
        <position position="138"/>
    </location>
</feature>
<feature type="strand" evidence="12">
    <location>
        <begin position="24"/>
        <end position="30"/>
    </location>
</feature>
<feature type="strand" evidence="12">
    <location>
        <begin position="33"/>
        <end position="38"/>
    </location>
</feature>
<feature type="helix" evidence="12">
    <location>
        <begin position="39"/>
        <end position="42"/>
    </location>
</feature>
<feature type="helix" evidence="12">
    <location>
        <begin position="49"/>
        <end position="54"/>
    </location>
</feature>
<feature type="strand" evidence="12">
    <location>
        <begin position="69"/>
        <end position="71"/>
    </location>
</feature>
<feature type="helix" evidence="12">
    <location>
        <begin position="75"/>
        <end position="77"/>
    </location>
</feature>
<feature type="helix" evidence="12">
    <location>
        <begin position="78"/>
        <end position="87"/>
    </location>
</feature>
<feature type="helix" evidence="12">
    <location>
        <begin position="98"/>
        <end position="108"/>
    </location>
</feature>
<feature type="helix" evidence="12">
    <location>
        <begin position="111"/>
        <end position="119"/>
    </location>
</feature>
<organism>
    <name type="scientific">Homo sapiens</name>
    <name type="common">Human</name>
    <dbReference type="NCBI Taxonomy" id="9606"/>
    <lineage>
        <taxon>Eukaryota</taxon>
        <taxon>Metazoa</taxon>
        <taxon>Chordata</taxon>
        <taxon>Craniata</taxon>
        <taxon>Vertebrata</taxon>
        <taxon>Euteleostomi</taxon>
        <taxon>Mammalia</taxon>
        <taxon>Eutheria</taxon>
        <taxon>Euarchontoglires</taxon>
        <taxon>Primates</taxon>
        <taxon>Haplorrhini</taxon>
        <taxon>Catarrhini</taxon>
        <taxon>Hominidae</taxon>
        <taxon>Homo</taxon>
    </lineage>
</organism>
<proteinExistence type="evidence at protein level"/>
<name>KCD17_HUMAN</name>
<accession>Q8N5Z5</accession>
<accession>B0QYA9</accession>
<accession>B0QYB0</accession>
<accession>O95517</accession>
<evidence type="ECO:0000255" key="1"/>
<evidence type="ECO:0000255" key="2">
    <source>
        <dbReference type="PROSITE-ProRule" id="PRU00037"/>
    </source>
</evidence>
<evidence type="ECO:0000256" key="3">
    <source>
        <dbReference type="SAM" id="MobiDB-lite"/>
    </source>
</evidence>
<evidence type="ECO:0000269" key="4">
    <source>
    </source>
</evidence>
<evidence type="ECO:0000269" key="5">
    <source>
    </source>
</evidence>
<evidence type="ECO:0000269" key="6">
    <source>
    </source>
</evidence>
<evidence type="ECO:0000269" key="7">
    <source>
    </source>
</evidence>
<evidence type="ECO:0000303" key="8">
    <source>
    </source>
</evidence>
<evidence type="ECO:0000303" key="9">
    <source>
    </source>
</evidence>
<evidence type="ECO:0000305" key="10"/>
<evidence type="ECO:0000312" key="11">
    <source>
        <dbReference type="HGNC" id="HGNC:25705"/>
    </source>
</evidence>
<evidence type="ECO:0007829" key="12">
    <source>
        <dbReference type="PDB" id="5A6R"/>
    </source>
</evidence>
<comment type="function">
    <text evidence="5 6">Substrate-adapter for CUL3-RING ubiquitin ligase complexes which mediates the ubiquitination and subsequent proteasomal degradation of TCHP, a protein involved in ciliogenesis down-regulation. Thereby, positively regulates ciliogenesis, playing a crucial role in the initial steps of axoneme extension (PubMed:25270598). May also play a role in endoplasmic reticulum calcium ion homeostasis (PubMed:25983243).</text>
</comment>
<comment type="subunit">
    <text evidence="5 7">Homopentamer; forms a closed pentamer (PubMed:28963344). Interacts with CUL3; interaction is direct and forms a 5:5 heterodecamer (PubMed:28963344). Interacts with TCHP (PubMed:25270598). Interacts with CUL3, as part of the BCR(KCTD17) E3 ubiquitin ligase complex, at least composed of CUL3, KCTD17 and RBX1 (PubMed:25270598).</text>
</comment>
<comment type="interaction">
    <interactant intactId="EBI-743960">
        <id>Q8N5Z5</id>
    </interactant>
    <interactant intactId="EBI-25830928">
        <id>P02768-3</id>
        <label>ALB</label>
    </interactant>
    <organismsDiffer>false</organismsDiffer>
    <experiments>3</experiments>
</comment>
<comment type="interaction">
    <interactant intactId="EBI-743960">
        <id>Q8N5Z5</id>
    </interactant>
    <interactant intactId="EBI-21535880">
        <id>Q92870-2</id>
        <label>APBB2</label>
    </interactant>
    <organismsDiffer>false</organismsDiffer>
    <experiments>3</experiments>
</comment>
<comment type="interaction">
    <interactant intactId="EBI-743960">
        <id>Q8N5Z5</id>
    </interactant>
    <interactant intactId="EBI-718729">
        <id>P55212</id>
        <label>CASP6</label>
    </interactant>
    <organismsDiffer>false</organismsDiffer>
    <experiments>3</experiments>
</comment>
<comment type="interaction">
    <interactant intactId="EBI-743960">
        <id>Q8N5Z5</id>
    </interactant>
    <interactant intactId="EBI-25837549">
        <id>P28329-3</id>
        <label>CHAT</label>
    </interactant>
    <organismsDiffer>false</organismsDiffer>
    <experiments>3</experiments>
</comment>
<comment type="interaction">
    <interactant intactId="EBI-743960">
        <id>Q8N5Z5</id>
    </interactant>
    <interactant intactId="EBI-16041593">
        <id>O94985-2</id>
        <label>CLSTN1</label>
    </interactant>
    <organismsDiffer>false</organismsDiffer>
    <experiments>3</experiments>
</comment>
<comment type="interaction">
    <interactant intactId="EBI-743960">
        <id>Q8N5Z5</id>
    </interactant>
    <interactant intactId="EBI-446479">
        <id>P99999</id>
        <label>CYCS</label>
    </interactant>
    <organismsDiffer>false</organismsDiffer>
    <experiments>3</experiments>
</comment>
<comment type="interaction">
    <interactant intactId="EBI-743960">
        <id>Q8N5Z5</id>
    </interactant>
    <interactant intactId="EBI-930865">
        <id>Q14565</id>
        <label>DMC1</label>
    </interactant>
    <organismsDiffer>false</organismsDiffer>
    <experiments>4</experiments>
</comment>
<comment type="interaction">
    <interactant intactId="EBI-743960">
        <id>Q8N5Z5</id>
    </interactant>
    <interactant intactId="EBI-10976677">
        <id>G5E9A7</id>
        <label>DMWD</label>
    </interactant>
    <organismsDiffer>false</organismsDiffer>
    <experiments>3</experiments>
</comment>
<comment type="interaction">
    <interactant intactId="EBI-743960">
        <id>Q8N5Z5</id>
    </interactant>
    <interactant intactId="EBI-2513774">
        <id>O95363</id>
        <label>FARS2</label>
    </interactant>
    <organismsDiffer>false</organismsDiffer>
    <experiments>3</experiments>
</comment>
<comment type="interaction">
    <interactant intactId="EBI-743960">
        <id>Q8N5Z5</id>
    </interactant>
    <interactant intactId="EBI-348399">
        <id>P22607</id>
        <label>FGFR3</label>
    </interactant>
    <organismsDiffer>false</organismsDiffer>
    <experiments>3</experiments>
</comment>
<comment type="interaction">
    <interactant intactId="EBI-743960">
        <id>Q8N5Z5</id>
    </interactant>
    <interactant intactId="EBI-10226858">
        <id>Q0VDC6</id>
        <label>FKBP1A</label>
    </interactant>
    <organismsDiffer>false</organismsDiffer>
    <experiments>3</experiments>
</comment>
<comment type="interaction">
    <interactant intactId="EBI-743960">
        <id>Q8N5Z5</id>
    </interactant>
    <interactant intactId="EBI-9641086">
        <id>P21333-2</id>
        <label>FLNA</label>
    </interactant>
    <organismsDiffer>false</organismsDiffer>
    <experiments>3</experiments>
</comment>
<comment type="interaction">
    <interactant intactId="EBI-743960">
        <id>Q8N5Z5</id>
    </interactant>
    <interactant intactId="EBI-351506">
        <id>P06396</id>
        <label>GSN</label>
    </interactant>
    <organismsDiffer>false</organismsDiffer>
    <experiments>3</experiments>
</comment>
<comment type="interaction">
    <interactant intactId="EBI-743960">
        <id>Q8N5Z5</id>
    </interactant>
    <interactant intactId="EBI-473886">
        <id>O00291</id>
        <label>HIP1</label>
    </interactant>
    <organismsDiffer>false</organismsDiffer>
    <experiments>3</experiments>
</comment>
<comment type="interaction">
    <interactant intactId="EBI-743960">
        <id>Q8N5Z5</id>
    </interactant>
    <interactant intactId="EBI-356991">
        <id>P54652</id>
        <label>HSPA2</label>
    </interactant>
    <organismsDiffer>false</organismsDiffer>
    <experiments>3</experiments>
</comment>
<comment type="interaction">
    <interactant intactId="EBI-743960">
        <id>Q8N5Z5</id>
    </interactant>
    <interactant intactId="EBI-517086">
        <id>O43464</id>
        <label>HTRA2</label>
    </interactant>
    <organismsDiffer>false</organismsDiffer>
    <experiments>3</experiments>
</comment>
<comment type="interaction">
    <interactant intactId="EBI-743960">
        <id>Q8N5Z5</id>
    </interactant>
    <interactant intactId="EBI-466029">
        <id>P42858</id>
        <label>HTT</label>
    </interactant>
    <organismsDiffer>false</organismsDiffer>
    <experiments>3</experiments>
</comment>
<comment type="interaction">
    <interactant intactId="EBI-743960">
        <id>Q8N5Z5</id>
    </interactant>
    <interactant intactId="EBI-399080">
        <id>Q92993</id>
        <label>KAT5</label>
    </interactant>
    <organismsDiffer>false</organismsDiffer>
    <experiments>3</experiments>
</comment>
<comment type="interaction">
    <interactant intactId="EBI-743960">
        <id>Q8N5Z5</id>
    </interactant>
    <interactant intactId="EBI-743960">
        <id>Q8N5Z5</id>
        <label>KCTD17</label>
    </interactant>
    <organismsDiffer>false</organismsDiffer>
    <experiments>2</experiments>
</comment>
<comment type="interaction">
    <interactant intactId="EBI-743960">
        <id>Q8N5Z5</id>
    </interactant>
    <interactant intactId="EBI-21591415">
        <id>P13473-2</id>
        <label>LAMP2</label>
    </interactant>
    <organismsDiffer>false</organismsDiffer>
    <experiments>3</experiments>
</comment>
<comment type="interaction">
    <interactant intactId="EBI-743960">
        <id>Q8N5Z5</id>
    </interactant>
    <interactant intactId="EBI-8070286">
        <id>O43561-2</id>
        <label>LAT</label>
    </interactant>
    <organismsDiffer>false</organismsDiffer>
    <experiments>3</experiments>
</comment>
<comment type="interaction">
    <interactant intactId="EBI-743960">
        <id>Q8N5Z5</id>
    </interactant>
    <interactant intactId="EBI-11742507">
        <id>Q8TAP4-4</id>
        <label>LMO3</label>
    </interactant>
    <organismsDiffer>false</organismsDiffer>
    <experiments>3</experiments>
</comment>
<comment type="interaction">
    <interactant intactId="EBI-743960">
        <id>Q8N5Z5</id>
    </interactant>
    <interactant intactId="EBI-473196">
        <id>Q5T3J3</id>
        <label>LRIF1</label>
    </interactant>
    <organismsDiffer>false</organismsDiffer>
    <experiments>3</experiments>
</comment>
<comment type="interaction">
    <interactant intactId="EBI-743960">
        <id>Q8N5Z5</id>
    </interactant>
    <interactant intactId="EBI-713635">
        <id>O43639</id>
        <label>NCK2</label>
    </interactant>
    <organismsDiffer>false</organismsDiffer>
    <experiments>3</experiments>
</comment>
<comment type="interaction">
    <interactant intactId="EBI-743960">
        <id>Q8N5Z5</id>
    </interactant>
    <interactant intactId="EBI-12141505">
        <id>Q8TCB6</id>
        <label>OR51E1</label>
    </interactant>
    <organismsDiffer>false</organismsDiffer>
    <experiments>3</experiments>
</comment>
<comment type="interaction">
    <interactant intactId="EBI-743960">
        <id>Q8N5Z5</id>
    </interactant>
    <interactant intactId="EBI-602382">
        <id>Q16512</id>
        <label>PKN1</label>
    </interactant>
    <organismsDiffer>false</organismsDiffer>
    <experiments>3</experiments>
</comment>
<comment type="interaction">
    <interactant intactId="EBI-743960">
        <id>Q8N5Z5</id>
    </interactant>
    <interactant intactId="EBI-50433196">
        <id>A0A6Q8PF08</id>
        <label>PMP22</label>
    </interactant>
    <organismsDiffer>false</organismsDiffer>
    <experiments>3</experiments>
</comment>
<comment type="interaction">
    <interactant intactId="EBI-743960">
        <id>Q8N5Z5</id>
    </interactant>
    <interactant intactId="EBI-25884072">
        <id>P62937-2</id>
        <label>PPIA</label>
    </interactant>
    <organismsDiffer>false</organismsDiffer>
    <experiments>3</experiments>
</comment>
<comment type="interaction">
    <interactant intactId="EBI-743960">
        <id>Q8N5Z5</id>
    </interactant>
    <interactant intactId="EBI-359252">
        <id>P23284</id>
        <label>PPIB</label>
    </interactant>
    <organismsDiffer>false</organismsDiffer>
    <experiments>3</experiments>
</comment>
<comment type="interaction">
    <interactant intactId="EBI-743960">
        <id>Q8N5Z5</id>
    </interactant>
    <interactant intactId="EBI-5280197">
        <id>O75400-2</id>
        <label>PRPF40A</label>
    </interactant>
    <organismsDiffer>false</organismsDiffer>
    <experiments>3</experiments>
</comment>
<comment type="interaction">
    <interactant intactId="EBI-743960">
        <id>Q8N5Z5</id>
    </interactant>
    <interactant intactId="EBI-752074">
        <id>P41219</id>
        <label>PRPH</label>
    </interactant>
    <organismsDiffer>false</organismsDiffer>
    <experiments>3</experiments>
</comment>
<comment type="interaction">
    <interactant intactId="EBI-743960">
        <id>Q8N5Z5</id>
    </interactant>
    <interactant intactId="EBI-413628">
        <id>P63000</id>
        <label>RAC1</label>
    </interactant>
    <organismsDiffer>false</organismsDiffer>
    <experiments>3</experiments>
</comment>
<comment type="interaction">
    <interactant intactId="EBI-743960">
        <id>Q8N5Z5</id>
    </interactant>
    <interactant intactId="EBI-286642">
        <id>P62826</id>
        <label>RAN</label>
    </interactant>
    <organismsDiffer>false</organismsDiffer>
    <experiments>3</experiments>
</comment>
<comment type="interaction">
    <interactant intactId="EBI-743960">
        <id>Q8N5Z5</id>
    </interactant>
    <interactant intactId="EBI-9090795">
        <id>Q15047-2</id>
        <label>SETDB1</label>
    </interactant>
    <organismsDiffer>false</organismsDiffer>
    <experiments>3</experiments>
</comment>
<comment type="interaction">
    <interactant intactId="EBI-743960">
        <id>Q8N5Z5</id>
    </interactant>
    <interactant intactId="EBI-2623095">
        <id>Q9Y371</id>
        <label>SH3GLB1</label>
    </interactant>
    <organismsDiffer>false</organismsDiffer>
    <experiments>3</experiments>
</comment>
<comment type="interaction">
    <interactant intactId="EBI-743960">
        <id>Q8N5Z5</id>
    </interactant>
    <interactant intactId="EBI-5235340">
        <id>Q7Z699</id>
        <label>SPRED1</label>
    </interactant>
    <organismsDiffer>false</organismsDiffer>
    <experiments>3</experiments>
</comment>
<comment type="interaction">
    <interactant intactId="EBI-743960">
        <id>Q8N5Z5</id>
    </interactant>
    <interactant intactId="EBI-749295">
        <id>O75716</id>
        <label>STK16</label>
    </interactant>
    <organismsDiffer>false</organismsDiffer>
    <experiments>9</experiments>
</comment>
<comment type="interaction">
    <interactant intactId="EBI-743960">
        <id>Q8N5Z5</id>
    </interactant>
    <interactant intactId="EBI-723127">
        <id>Q9H5I1</id>
        <label>SUV39H2</label>
    </interactant>
    <organismsDiffer>false</organismsDiffer>
    <experiments>2</experiments>
</comment>
<comment type="interaction">
    <interactant intactId="EBI-743960">
        <id>Q8N5Z5</id>
    </interactant>
    <interactant intactId="EBI-372899">
        <id>Q13148</id>
        <label>TARDBP</label>
    </interactant>
    <organismsDiffer>false</organismsDiffer>
    <experiments>6</experiments>
</comment>
<comment type="interaction">
    <interactant intactId="EBI-743960">
        <id>Q8N5Z5</id>
    </interactant>
    <interactant intactId="EBI-717399">
        <id>Q9BSI4</id>
        <label>TINF2</label>
    </interactant>
    <organismsDiffer>false</organismsDiffer>
    <experiments>2</experiments>
</comment>
<comment type="interaction">
    <interactant intactId="EBI-743960">
        <id>Q8N5Z5</id>
    </interactant>
    <interactant intactId="EBI-741480">
        <id>Q9UMX0</id>
        <label>UBQLN1</label>
    </interactant>
    <organismsDiffer>false</organismsDiffer>
    <experiments>3</experiments>
</comment>
<comment type="interaction">
    <interactant intactId="EBI-743960">
        <id>Q8N5Z5</id>
    </interactant>
    <interactant intactId="EBI-1052596">
        <id>P31930</id>
        <label>UQCRC1</label>
    </interactant>
    <organismsDiffer>false</organismsDiffer>
    <experiments>3</experiments>
</comment>
<comment type="interaction">
    <interactant intactId="EBI-743960">
        <id>Q8N5Z5</id>
    </interactant>
    <interactant intactId="EBI-359832">
        <id>P61981</id>
        <label>YWHAG</label>
    </interactant>
    <organismsDiffer>false</organismsDiffer>
    <experiments>3</experiments>
</comment>
<comment type="interaction">
    <interactant intactId="EBI-743960">
        <id>Q8N5Z5</id>
    </interactant>
    <interactant intactId="EBI-25872486">
        <id>Q96BH6</id>
    </interactant>
    <organismsDiffer>false</organismsDiffer>
    <experiments>3</experiments>
</comment>
<comment type="interaction">
    <interactant intactId="EBI-10189368">
        <id>Q8N5Z5-2</id>
    </interactant>
    <interactant intactId="EBI-749295">
        <id>O75716</id>
        <label>STK16</label>
    </interactant>
    <organismsDiffer>false</organismsDiffer>
    <experiments>3</experiments>
</comment>
<comment type="subcellular location">
    <subcellularLocation>
        <location evidence="6">Cytoplasm</location>
    </subcellularLocation>
</comment>
<comment type="alternative products">
    <event type="alternative splicing"/>
    <isoform>
        <id>Q8N5Z5-1</id>
        <name>1</name>
        <sequence type="displayed"/>
    </isoform>
    <isoform>
        <id>Q8N5Z5-2</id>
        <name>2</name>
        <sequence type="described" ref="VSP_020072"/>
    </isoform>
</comment>
<comment type="tissue specificity">
    <text evidence="6">Highly expressed in brain. Highest expression is observed in the putamen and the thalamus.</text>
</comment>
<comment type="disease" evidence="6">
    <disease id="DI-04408">
        <name>Dystonia 26, myoclonic</name>
        <acronym>DYT26</acronym>
        <description>A form of dystonia, a disorder defined by the presence of sustained involuntary muscle contraction, often leading to abnormal postures. DYT26 is an autosomal dominant, progressive disorder characterized by a combination of non-epileptic myoclonic jerks and dystonia. Affected individuals manifest myoclonic jerks in the upper limbs during the first or second decade of life, and later develop dystonia with predominant involvement of the craniocervical regions and sometimes the trunk and/or lower limbs.</description>
        <dbReference type="MIM" id="616398"/>
    </disease>
    <text>The disease is caused by variants affecting the gene represented in this entry.</text>
</comment>
<comment type="sequence caution" evidence="10">
    <conflict type="erroneous initiation">
        <sequence resource="EMBL-CDS" id="EAW60139"/>
    </conflict>
    <text>Extended N-terminus.</text>
</comment>